<organism>
    <name type="scientific">Granulibacter bethesdensis (strain ATCC BAA-1260 / CGDNIH1)</name>
    <dbReference type="NCBI Taxonomy" id="391165"/>
    <lineage>
        <taxon>Bacteria</taxon>
        <taxon>Pseudomonadati</taxon>
        <taxon>Pseudomonadota</taxon>
        <taxon>Alphaproteobacteria</taxon>
        <taxon>Acetobacterales</taxon>
        <taxon>Acetobacteraceae</taxon>
        <taxon>Granulibacter</taxon>
    </lineage>
</organism>
<gene>
    <name evidence="1" type="primary">lepA</name>
    <name type="ordered locus">GbCGDNIH1_1507</name>
</gene>
<dbReference type="EC" id="3.6.5.n1" evidence="1"/>
<dbReference type="EMBL" id="CP000394">
    <property type="protein sequence ID" value="ABI62405.1"/>
    <property type="status" value="ALT_INIT"/>
    <property type="molecule type" value="Genomic_DNA"/>
</dbReference>
<dbReference type="RefSeq" id="WP_043452876.1">
    <property type="nucleotide sequence ID" value="NC_008343.2"/>
</dbReference>
<dbReference type="SMR" id="Q0BRZ7"/>
<dbReference type="STRING" id="391165.GbCGDNIH1_1507"/>
<dbReference type="KEGG" id="gbe:GbCGDNIH1_1507"/>
<dbReference type="eggNOG" id="COG0481">
    <property type="taxonomic scope" value="Bacteria"/>
</dbReference>
<dbReference type="HOGENOM" id="CLU_009995_3_3_5"/>
<dbReference type="OrthoDB" id="9802948at2"/>
<dbReference type="Proteomes" id="UP000001963">
    <property type="component" value="Chromosome"/>
</dbReference>
<dbReference type="GO" id="GO:0005886">
    <property type="term" value="C:plasma membrane"/>
    <property type="evidence" value="ECO:0007669"/>
    <property type="project" value="UniProtKB-SubCell"/>
</dbReference>
<dbReference type="GO" id="GO:0005525">
    <property type="term" value="F:GTP binding"/>
    <property type="evidence" value="ECO:0007669"/>
    <property type="project" value="UniProtKB-UniRule"/>
</dbReference>
<dbReference type="GO" id="GO:0003924">
    <property type="term" value="F:GTPase activity"/>
    <property type="evidence" value="ECO:0007669"/>
    <property type="project" value="UniProtKB-UniRule"/>
</dbReference>
<dbReference type="GO" id="GO:0097216">
    <property type="term" value="F:guanosine tetraphosphate binding"/>
    <property type="evidence" value="ECO:0007669"/>
    <property type="project" value="UniProtKB-ARBA"/>
</dbReference>
<dbReference type="GO" id="GO:0043022">
    <property type="term" value="F:ribosome binding"/>
    <property type="evidence" value="ECO:0007669"/>
    <property type="project" value="UniProtKB-UniRule"/>
</dbReference>
<dbReference type="GO" id="GO:0003746">
    <property type="term" value="F:translation elongation factor activity"/>
    <property type="evidence" value="ECO:0007669"/>
    <property type="project" value="UniProtKB-UniRule"/>
</dbReference>
<dbReference type="GO" id="GO:0045727">
    <property type="term" value="P:positive regulation of translation"/>
    <property type="evidence" value="ECO:0007669"/>
    <property type="project" value="UniProtKB-UniRule"/>
</dbReference>
<dbReference type="CDD" id="cd03699">
    <property type="entry name" value="EF4_II"/>
    <property type="match status" value="1"/>
</dbReference>
<dbReference type="CDD" id="cd16260">
    <property type="entry name" value="EF4_III"/>
    <property type="match status" value="1"/>
</dbReference>
<dbReference type="CDD" id="cd01890">
    <property type="entry name" value="LepA"/>
    <property type="match status" value="1"/>
</dbReference>
<dbReference type="CDD" id="cd03709">
    <property type="entry name" value="lepA_C"/>
    <property type="match status" value="1"/>
</dbReference>
<dbReference type="FunFam" id="3.40.50.300:FF:000078">
    <property type="entry name" value="Elongation factor 4"/>
    <property type="match status" value="1"/>
</dbReference>
<dbReference type="FunFam" id="2.40.30.10:FF:000015">
    <property type="entry name" value="Translation factor GUF1, mitochondrial"/>
    <property type="match status" value="1"/>
</dbReference>
<dbReference type="FunFam" id="3.30.70.240:FF:000007">
    <property type="entry name" value="Translation factor GUF1, mitochondrial"/>
    <property type="match status" value="1"/>
</dbReference>
<dbReference type="FunFam" id="3.30.70.2570:FF:000001">
    <property type="entry name" value="Translation factor GUF1, mitochondrial"/>
    <property type="match status" value="1"/>
</dbReference>
<dbReference type="FunFam" id="3.30.70.870:FF:000004">
    <property type="entry name" value="Translation factor GUF1, mitochondrial"/>
    <property type="match status" value="1"/>
</dbReference>
<dbReference type="Gene3D" id="3.30.70.240">
    <property type="match status" value="1"/>
</dbReference>
<dbReference type="Gene3D" id="3.30.70.2570">
    <property type="entry name" value="Elongation factor 4, C-terminal domain"/>
    <property type="match status" value="1"/>
</dbReference>
<dbReference type="Gene3D" id="3.30.70.870">
    <property type="entry name" value="Elongation Factor G (Translational Gtpase), domain 3"/>
    <property type="match status" value="1"/>
</dbReference>
<dbReference type="Gene3D" id="3.40.50.300">
    <property type="entry name" value="P-loop containing nucleotide triphosphate hydrolases"/>
    <property type="match status" value="1"/>
</dbReference>
<dbReference type="Gene3D" id="2.40.30.10">
    <property type="entry name" value="Translation factors"/>
    <property type="match status" value="1"/>
</dbReference>
<dbReference type="HAMAP" id="MF_00071">
    <property type="entry name" value="LepA"/>
    <property type="match status" value="1"/>
</dbReference>
<dbReference type="InterPro" id="IPR006297">
    <property type="entry name" value="EF-4"/>
</dbReference>
<dbReference type="InterPro" id="IPR035647">
    <property type="entry name" value="EFG_III/V"/>
</dbReference>
<dbReference type="InterPro" id="IPR000640">
    <property type="entry name" value="EFG_V-like"/>
</dbReference>
<dbReference type="InterPro" id="IPR004161">
    <property type="entry name" value="EFTu-like_2"/>
</dbReference>
<dbReference type="InterPro" id="IPR031157">
    <property type="entry name" value="G_TR_CS"/>
</dbReference>
<dbReference type="InterPro" id="IPR038363">
    <property type="entry name" value="LepA_C_sf"/>
</dbReference>
<dbReference type="InterPro" id="IPR013842">
    <property type="entry name" value="LepA_CTD"/>
</dbReference>
<dbReference type="InterPro" id="IPR035654">
    <property type="entry name" value="LepA_IV"/>
</dbReference>
<dbReference type="InterPro" id="IPR027417">
    <property type="entry name" value="P-loop_NTPase"/>
</dbReference>
<dbReference type="InterPro" id="IPR005225">
    <property type="entry name" value="Small_GTP-bd"/>
</dbReference>
<dbReference type="InterPro" id="IPR000795">
    <property type="entry name" value="T_Tr_GTP-bd_dom"/>
</dbReference>
<dbReference type="NCBIfam" id="TIGR01393">
    <property type="entry name" value="lepA"/>
    <property type="match status" value="1"/>
</dbReference>
<dbReference type="NCBIfam" id="TIGR00231">
    <property type="entry name" value="small_GTP"/>
    <property type="match status" value="1"/>
</dbReference>
<dbReference type="PANTHER" id="PTHR43512:SF4">
    <property type="entry name" value="TRANSLATION FACTOR GUF1 HOMOLOG, CHLOROPLASTIC"/>
    <property type="match status" value="1"/>
</dbReference>
<dbReference type="PANTHER" id="PTHR43512">
    <property type="entry name" value="TRANSLATION FACTOR GUF1-RELATED"/>
    <property type="match status" value="1"/>
</dbReference>
<dbReference type="Pfam" id="PF00679">
    <property type="entry name" value="EFG_C"/>
    <property type="match status" value="1"/>
</dbReference>
<dbReference type="Pfam" id="PF00009">
    <property type="entry name" value="GTP_EFTU"/>
    <property type="match status" value="1"/>
</dbReference>
<dbReference type="Pfam" id="PF03144">
    <property type="entry name" value="GTP_EFTU_D2"/>
    <property type="match status" value="1"/>
</dbReference>
<dbReference type="Pfam" id="PF06421">
    <property type="entry name" value="LepA_C"/>
    <property type="match status" value="1"/>
</dbReference>
<dbReference type="PRINTS" id="PR00315">
    <property type="entry name" value="ELONGATNFCT"/>
</dbReference>
<dbReference type="SMART" id="SM00838">
    <property type="entry name" value="EFG_C"/>
    <property type="match status" value="1"/>
</dbReference>
<dbReference type="SUPFAM" id="SSF54980">
    <property type="entry name" value="EF-G C-terminal domain-like"/>
    <property type="match status" value="2"/>
</dbReference>
<dbReference type="SUPFAM" id="SSF52540">
    <property type="entry name" value="P-loop containing nucleoside triphosphate hydrolases"/>
    <property type="match status" value="1"/>
</dbReference>
<dbReference type="PROSITE" id="PS00301">
    <property type="entry name" value="G_TR_1"/>
    <property type="match status" value="1"/>
</dbReference>
<dbReference type="PROSITE" id="PS51722">
    <property type="entry name" value="G_TR_2"/>
    <property type="match status" value="1"/>
</dbReference>
<protein>
    <recommendedName>
        <fullName evidence="1">Elongation factor 4</fullName>
        <shortName evidence="1">EF-4</shortName>
        <ecNumber evidence="1">3.6.5.n1</ecNumber>
    </recommendedName>
    <alternativeName>
        <fullName evidence="1">Ribosomal back-translocase LepA</fullName>
    </alternativeName>
</protein>
<keyword id="KW-0997">Cell inner membrane</keyword>
<keyword id="KW-1003">Cell membrane</keyword>
<keyword id="KW-0342">GTP-binding</keyword>
<keyword id="KW-0378">Hydrolase</keyword>
<keyword id="KW-0472">Membrane</keyword>
<keyword id="KW-0547">Nucleotide-binding</keyword>
<keyword id="KW-0648">Protein biosynthesis</keyword>
<keyword id="KW-1185">Reference proteome</keyword>
<feature type="chain" id="PRO_0000265662" description="Elongation factor 4">
    <location>
        <begin position="1"/>
        <end position="601"/>
    </location>
</feature>
<feature type="domain" description="tr-type G">
    <location>
        <begin position="7"/>
        <end position="189"/>
    </location>
</feature>
<feature type="binding site" evidence="1">
    <location>
        <begin position="19"/>
        <end position="24"/>
    </location>
    <ligand>
        <name>GTP</name>
        <dbReference type="ChEBI" id="CHEBI:37565"/>
    </ligand>
</feature>
<feature type="binding site" evidence="1">
    <location>
        <begin position="136"/>
        <end position="139"/>
    </location>
    <ligand>
        <name>GTP</name>
        <dbReference type="ChEBI" id="CHEBI:37565"/>
    </ligand>
</feature>
<comment type="function">
    <text evidence="1">Required for accurate and efficient protein synthesis under certain stress conditions. May act as a fidelity factor of the translation reaction, by catalyzing a one-codon backward translocation of tRNAs on improperly translocated ribosomes. Back-translocation proceeds from a post-translocation (POST) complex to a pre-translocation (PRE) complex, thus giving elongation factor G a second chance to translocate the tRNAs correctly. Binds to ribosomes in a GTP-dependent manner.</text>
</comment>
<comment type="catalytic activity">
    <reaction evidence="1">
        <text>GTP + H2O = GDP + phosphate + H(+)</text>
        <dbReference type="Rhea" id="RHEA:19669"/>
        <dbReference type="ChEBI" id="CHEBI:15377"/>
        <dbReference type="ChEBI" id="CHEBI:15378"/>
        <dbReference type="ChEBI" id="CHEBI:37565"/>
        <dbReference type="ChEBI" id="CHEBI:43474"/>
        <dbReference type="ChEBI" id="CHEBI:58189"/>
        <dbReference type="EC" id="3.6.5.n1"/>
    </reaction>
</comment>
<comment type="subcellular location">
    <subcellularLocation>
        <location evidence="1">Cell inner membrane</location>
        <topology evidence="1">Peripheral membrane protein</topology>
        <orientation evidence="1">Cytoplasmic side</orientation>
    </subcellularLocation>
</comment>
<comment type="similarity">
    <text evidence="1">Belongs to the TRAFAC class translation factor GTPase superfamily. Classic translation factor GTPase family. LepA subfamily.</text>
</comment>
<comment type="sequence caution" evidence="2">
    <conflict type="erroneous initiation">
        <sequence resource="EMBL-CDS" id="ABI62405"/>
    </conflict>
</comment>
<accession>Q0BRZ7</accession>
<evidence type="ECO:0000255" key="1">
    <source>
        <dbReference type="HAMAP-Rule" id="MF_00071"/>
    </source>
</evidence>
<evidence type="ECO:0000305" key="2"/>
<sequence>MTDIPIDRIRNFSIIAHIDHGKSTLADRLIQLTGALSDREMTNQVLDNMELERERGITIKAQTVRLTYRAKDGLVYALNLMDTPGHVDFAYEVSRSLAACEGSLLVVDASQGVEAQTLANVYQAIDANHEIVPVLNKVDLPAAEPDRVKKQIEDVIGLDASDALMISAKTGLGVDTVLEALVTRLPAPKGNANGELKALLVDSWYDAYLGVIILVRVKDGVLRRGQKIRMMSTGATYTVDQVGVFSPRMTPVETLNPGEMGYINAAIKTVADTNVGDTITDDRVPAAEPLAGFKPSIPVVWCGLYPIDADDFEKLRDSLGKLRLNDASFHFEAETSAALGFGFRCGFLGLLHLEIIQERLSREFDLDLIATAPSVVYKLHKTNGEHLELHNPADMPDGSVIEKIEEPWIKATIMVPDDYLGAILTLCSERRGQQVDLTYVGNRAMAVYRLPLNEVVFDFYDRLKSVSRGYASFDYQMDGYEESDLVRISILVNAEAVDALSFIAHRSAAENRGRQICAKLKELIPRQLFKIAIQAAIGSRIIARETLGALSKDVTAKCYGGDISRKRKLLEKQKEGKKRMRQFGKVEIPQSAFLAALKMDN</sequence>
<proteinExistence type="inferred from homology"/>
<name>LEPA_GRABC</name>
<reference key="1">
    <citation type="journal article" date="2007" name="J. Bacteriol.">
        <title>Genome sequence analysis of the emerging human pathogenic acetic acid bacterium Granulibacter bethesdensis.</title>
        <authorList>
            <person name="Greenberg D.E."/>
            <person name="Porcella S.F."/>
            <person name="Zelazny A.M."/>
            <person name="Virtaneva K."/>
            <person name="Sturdevant D.E."/>
            <person name="Kupko J.J. III"/>
            <person name="Barbian K.D."/>
            <person name="Babar A."/>
            <person name="Dorward D.W."/>
            <person name="Holland S.M."/>
        </authorList>
    </citation>
    <scope>NUCLEOTIDE SEQUENCE [LARGE SCALE GENOMIC DNA]</scope>
    <source>
        <strain>ATCC BAA-1260 / CGDNIH1</strain>
    </source>
</reference>